<dbReference type="EC" id="2.4.2.28" evidence="1"/>
<dbReference type="EMBL" id="AAMC01028797">
    <property type="status" value="NOT_ANNOTATED_CDS"/>
    <property type="molecule type" value="Genomic_DNA"/>
</dbReference>
<dbReference type="EMBL" id="AAMC01028798">
    <property type="status" value="NOT_ANNOTATED_CDS"/>
    <property type="molecule type" value="Genomic_DNA"/>
</dbReference>
<dbReference type="SMR" id="F6V515"/>
<dbReference type="FunCoup" id="F6V515">
    <property type="interactions" value="1965"/>
</dbReference>
<dbReference type="STRING" id="8364.ENSXETP00000015654"/>
<dbReference type="PaxDb" id="8364-ENSXETP00000012027"/>
<dbReference type="eggNOG" id="KOG3985">
    <property type="taxonomic scope" value="Eukaryota"/>
</dbReference>
<dbReference type="HOGENOM" id="CLU_054456_0_0_1"/>
<dbReference type="InParanoid" id="F6V515"/>
<dbReference type="TreeFam" id="TF312883"/>
<dbReference type="UniPathway" id="UPA00904">
    <property type="reaction ID" value="UER00873"/>
</dbReference>
<dbReference type="Proteomes" id="UP000008143">
    <property type="component" value="Unplaced"/>
</dbReference>
<dbReference type="GO" id="GO:0005737">
    <property type="term" value="C:cytoplasm"/>
    <property type="evidence" value="ECO:0007669"/>
    <property type="project" value="UniProtKB-SubCell"/>
</dbReference>
<dbReference type="GO" id="GO:0005634">
    <property type="term" value="C:nucleus"/>
    <property type="evidence" value="ECO:0007669"/>
    <property type="project" value="UniProtKB-SubCell"/>
</dbReference>
<dbReference type="GO" id="GO:0017061">
    <property type="term" value="F:S-methyl-5-thioadenosine phosphorylase activity"/>
    <property type="evidence" value="ECO:0007669"/>
    <property type="project" value="UniProtKB-UniRule"/>
</dbReference>
<dbReference type="GO" id="GO:0019509">
    <property type="term" value="P:L-methionine salvage from methylthioadenosine"/>
    <property type="evidence" value="ECO:0007669"/>
    <property type="project" value="UniProtKB-UniRule"/>
</dbReference>
<dbReference type="GO" id="GO:0006166">
    <property type="term" value="P:purine ribonucleoside salvage"/>
    <property type="evidence" value="ECO:0007669"/>
    <property type="project" value="UniProtKB-KW"/>
</dbReference>
<dbReference type="CDD" id="cd09010">
    <property type="entry name" value="MTAP_SsMTAPII_like_MTIP"/>
    <property type="match status" value="1"/>
</dbReference>
<dbReference type="FunFam" id="3.40.50.1580:FF:000006">
    <property type="entry name" value="Purine nucleoside phosphorylase"/>
    <property type="match status" value="1"/>
</dbReference>
<dbReference type="Gene3D" id="3.40.50.1580">
    <property type="entry name" value="Nucleoside phosphorylase domain"/>
    <property type="match status" value="1"/>
</dbReference>
<dbReference type="HAMAP" id="MF_01963">
    <property type="entry name" value="MTAP"/>
    <property type="match status" value="1"/>
</dbReference>
<dbReference type="InterPro" id="IPR010044">
    <property type="entry name" value="MTAP"/>
</dbReference>
<dbReference type="InterPro" id="IPR000845">
    <property type="entry name" value="Nucleoside_phosphorylase_d"/>
</dbReference>
<dbReference type="InterPro" id="IPR035994">
    <property type="entry name" value="Nucleoside_phosphorylase_sf"/>
</dbReference>
<dbReference type="NCBIfam" id="TIGR01694">
    <property type="entry name" value="MTAP"/>
    <property type="match status" value="1"/>
</dbReference>
<dbReference type="PANTHER" id="PTHR42679">
    <property type="entry name" value="S-METHYL-5'-THIOADENOSINE PHOSPHORYLASE"/>
    <property type="match status" value="1"/>
</dbReference>
<dbReference type="PANTHER" id="PTHR42679:SF2">
    <property type="entry name" value="S-METHYL-5'-THIOADENOSINE PHOSPHORYLASE"/>
    <property type="match status" value="1"/>
</dbReference>
<dbReference type="Pfam" id="PF01048">
    <property type="entry name" value="PNP_UDP_1"/>
    <property type="match status" value="1"/>
</dbReference>
<dbReference type="SUPFAM" id="SSF53167">
    <property type="entry name" value="Purine and uridine phosphorylases"/>
    <property type="match status" value="1"/>
</dbReference>
<feature type="chain" id="PRO_0000415115" description="S-methyl-5'-thioadenosine phosphorylase">
    <location>
        <begin position="1"/>
        <end position="281"/>
    </location>
</feature>
<feature type="binding site" evidence="1">
    <location>
        <position position="15"/>
    </location>
    <ligand>
        <name>phosphate</name>
        <dbReference type="ChEBI" id="CHEBI:43474"/>
    </ligand>
</feature>
<feature type="binding site" evidence="1">
    <location>
        <begin position="58"/>
        <end position="59"/>
    </location>
    <ligand>
        <name>phosphate</name>
        <dbReference type="ChEBI" id="CHEBI:43474"/>
    </ligand>
</feature>
<feature type="binding site" evidence="1">
    <location>
        <begin position="91"/>
        <end position="92"/>
    </location>
    <ligand>
        <name>phosphate</name>
        <dbReference type="ChEBI" id="CHEBI:43474"/>
    </ligand>
</feature>
<feature type="binding site" evidence="1">
    <location>
        <position position="194"/>
    </location>
    <ligand>
        <name>substrate</name>
    </ligand>
</feature>
<feature type="binding site" evidence="1">
    <location>
        <position position="195"/>
    </location>
    <ligand>
        <name>phosphate</name>
        <dbReference type="ChEBI" id="CHEBI:43474"/>
    </ligand>
</feature>
<feature type="binding site" evidence="1">
    <location>
        <begin position="218"/>
        <end position="220"/>
    </location>
    <ligand>
        <name>substrate</name>
    </ligand>
</feature>
<feature type="site" description="Important for substrate specificity" evidence="1">
    <location>
        <position position="176"/>
    </location>
</feature>
<feature type="site" description="Important for substrate specificity" evidence="1">
    <location>
        <position position="231"/>
    </location>
</feature>
<keyword id="KW-0963">Cytoplasm</keyword>
<keyword id="KW-0328">Glycosyltransferase</keyword>
<keyword id="KW-0539">Nucleus</keyword>
<keyword id="KW-0660">Purine salvage</keyword>
<keyword id="KW-1185">Reference proteome</keyword>
<keyword id="KW-0808">Transferase</keyword>
<proteinExistence type="inferred from homology"/>
<protein>
    <recommendedName>
        <fullName evidence="1">S-methyl-5'-thioadenosine phosphorylase</fullName>
        <ecNumber evidence="1">2.4.2.28</ecNumber>
    </recommendedName>
    <alternativeName>
        <fullName evidence="1">5'-methylthioadenosine phosphorylase</fullName>
        <shortName evidence="1">MTA phosphorylase</shortName>
        <shortName evidence="1">MTAP</shortName>
        <shortName evidence="1">MTAPase</shortName>
    </alternativeName>
</protein>
<comment type="function">
    <text evidence="1">Catalyzes the reversible phosphorylation of S-methyl-5'-thioadenosine (MTA) to adenine and 5-methylthioribose-1-phosphate. Involved in the breakdown of MTA, a major by-product of polyamine biosynthesis. Responsible for the first step in the methionine salvage pathway after MTA has been generated from S-adenosylmethionine. Has broad substrate specificity with 6-aminopurine nucleosides as preferred substrates.</text>
</comment>
<comment type="catalytic activity">
    <reaction evidence="1">
        <text>S-methyl-5'-thioadenosine + phosphate = 5-(methylsulfanyl)-alpha-D-ribose 1-phosphate + adenine</text>
        <dbReference type="Rhea" id="RHEA:11852"/>
        <dbReference type="ChEBI" id="CHEBI:16708"/>
        <dbReference type="ChEBI" id="CHEBI:17509"/>
        <dbReference type="ChEBI" id="CHEBI:43474"/>
        <dbReference type="ChEBI" id="CHEBI:58533"/>
        <dbReference type="EC" id="2.4.2.28"/>
    </reaction>
</comment>
<comment type="pathway">
    <text evidence="1">Amino-acid biosynthesis; L-methionine biosynthesis via salvage pathway; S-methyl-5-thio-alpha-D-ribose 1-phosphate from S-methyl-5'-thioadenosine (phosphorylase route): step 1/1.</text>
</comment>
<comment type="subunit">
    <text evidence="1">Homotrimer.</text>
</comment>
<comment type="subcellular location">
    <subcellularLocation>
        <location evidence="1">Cytoplasm</location>
    </subcellularLocation>
    <subcellularLocation>
        <location evidence="1">Nucleus</location>
    </subcellularLocation>
</comment>
<comment type="similarity">
    <text evidence="1">Belongs to the PNP/MTAP phosphorylase family. MTAP subfamily.</text>
</comment>
<name>MTAP_XENTR</name>
<reference key="1">
    <citation type="journal article" date="2010" name="Science">
        <title>The genome of the Western clawed frog Xenopus tropicalis.</title>
        <authorList>
            <person name="Hellsten U."/>
            <person name="Harland R.M."/>
            <person name="Gilchrist M.J."/>
            <person name="Hendrix D."/>
            <person name="Jurka J."/>
            <person name="Kapitonov V."/>
            <person name="Ovcharenko I."/>
            <person name="Putnam N.H."/>
            <person name="Shu S."/>
            <person name="Taher L."/>
            <person name="Blitz I.L."/>
            <person name="Blumberg B."/>
            <person name="Dichmann D.S."/>
            <person name="Dubchak I."/>
            <person name="Amaya E."/>
            <person name="Detter J.C."/>
            <person name="Fletcher R."/>
            <person name="Gerhard D.S."/>
            <person name="Goodstein D."/>
            <person name="Graves T."/>
            <person name="Grigoriev I.V."/>
            <person name="Grimwood J."/>
            <person name="Kawashima T."/>
            <person name="Lindquist E."/>
            <person name="Lucas S.M."/>
            <person name="Mead P.E."/>
            <person name="Mitros T."/>
            <person name="Ogino H."/>
            <person name="Ohta Y."/>
            <person name="Poliakov A.V."/>
            <person name="Pollet N."/>
            <person name="Robert J."/>
            <person name="Salamov A."/>
            <person name="Sater A.K."/>
            <person name="Schmutz J."/>
            <person name="Terry A."/>
            <person name="Vize P.D."/>
            <person name="Warren W.C."/>
            <person name="Wells D."/>
            <person name="Wills A."/>
            <person name="Wilson R.K."/>
            <person name="Zimmerman L.B."/>
            <person name="Zorn A.M."/>
            <person name="Grainger R."/>
            <person name="Grammer T."/>
            <person name="Khokha M.K."/>
            <person name="Richardson P.M."/>
            <person name="Rokhsar D.S."/>
        </authorList>
    </citation>
    <scope>NUCLEOTIDE SEQUENCE [LARGE SCALE GENOMIC DNA]</scope>
</reference>
<organism>
    <name type="scientific">Xenopus tropicalis</name>
    <name type="common">Western clawed frog</name>
    <name type="synonym">Silurana tropicalis</name>
    <dbReference type="NCBI Taxonomy" id="8364"/>
    <lineage>
        <taxon>Eukaryota</taxon>
        <taxon>Metazoa</taxon>
        <taxon>Chordata</taxon>
        <taxon>Craniata</taxon>
        <taxon>Vertebrata</taxon>
        <taxon>Euteleostomi</taxon>
        <taxon>Amphibia</taxon>
        <taxon>Batrachia</taxon>
        <taxon>Anura</taxon>
        <taxon>Pipoidea</taxon>
        <taxon>Pipidae</taxon>
        <taxon>Xenopodinae</taxon>
        <taxon>Xenopus</taxon>
        <taxon>Silurana</taxon>
    </lineage>
</organism>
<accession>F6V515</accession>
<sequence>MAGVCAVKVGIIGGSGLDDPDILEGRLEKYVDTPFGKPSDALVLGKIKNVDCVLLASRHGRQHTIAPTNVNYRANIWALKSEGCTHILVTTACGSLREEIQPGDIVIVDQFIDRTTKREQTFYDGGPSCLPGVCHIPMAEPFCAKTREVLIDIAKRLGIKCHSKGAMITIEGPRFSSKAESQMFRLWGADVINMTTVPEVILAKEAGICYASIAMATDYDCWKEHEEAVSVDRVLKTLKENANKATSILLTAIPQIAAMDWTELLQSMKSTVQLSVMLPKH</sequence>
<evidence type="ECO:0000255" key="1">
    <source>
        <dbReference type="HAMAP-Rule" id="MF_03155"/>
    </source>
</evidence>
<gene>
    <name type="primary">mtap</name>
</gene>